<gene>
    <name evidence="2" type="primary">rpsL</name>
    <name type="ordered locus">Mkms_1002</name>
</gene>
<reference key="1">
    <citation type="submission" date="2006-12" db="EMBL/GenBank/DDBJ databases">
        <title>Complete sequence of chromosome of Mycobacterium sp. KMS.</title>
        <authorList>
            <consortium name="US DOE Joint Genome Institute"/>
            <person name="Copeland A."/>
            <person name="Lucas S."/>
            <person name="Lapidus A."/>
            <person name="Barry K."/>
            <person name="Detter J.C."/>
            <person name="Glavina del Rio T."/>
            <person name="Hammon N."/>
            <person name="Israni S."/>
            <person name="Dalin E."/>
            <person name="Tice H."/>
            <person name="Pitluck S."/>
            <person name="Kiss H."/>
            <person name="Brettin T."/>
            <person name="Bruce D."/>
            <person name="Han C."/>
            <person name="Tapia R."/>
            <person name="Gilna P."/>
            <person name="Schmutz J."/>
            <person name="Larimer F."/>
            <person name="Land M."/>
            <person name="Hauser L."/>
            <person name="Kyrpides N."/>
            <person name="Mikhailova N."/>
            <person name="Miller C.D."/>
            <person name="Richardson P."/>
        </authorList>
    </citation>
    <scope>NUCLEOTIDE SEQUENCE [LARGE SCALE GENOMIC DNA]</scope>
    <source>
        <strain>KMS</strain>
    </source>
</reference>
<comment type="function">
    <text evidence="2">With S4 and S5 plays an important role in translational accuracy.</text>
</comment>
<comment type="function">
    <text evidence="2">Interacts with and stabilizes bases of the 16S rRNA that are involved in tRNA selection in the A site and with the mRNA backbone. Located at the interface of the 30S and 50S subunits, it traverses the body of the 30S subunit contacting proteins on the other side and probably holding the rRNA structure together. The combined cluster of proteins S8, S12 and S17 appears to hold together the shoulder and platform of the 30S subunit.</text>
</comment>
<comment type="subunit">
    <text evidence="2">Part of the 30S ribosomal subunit. Contacts proteins S8 and S17. May interact with IF1 in the 30S initiation complex.</text>
</comment>
<comment type="similarity">
    <text evidence="2">Belongs to the universal ribosomal protein uS12 family.</text>
</comment>
<accession>A1UBK8</accession>
<sequence>MPTINQLVRKGRRDKIAKVKTAALKGSPQRRGVCTRVYTTTPKKPNSALRKVARVKLTSQVEVTAYIPGEGHNLQEHSMVLVRGGRVKDLPGVRYKIIRGSLDTQGVKNRKQARSRYGAKKEKS</sequence>
<proteinExistence type="inferred from homology"/>
<protein>
    <recommendedName>
        <fullName evidence="2">Small ribosomal subunit protein uS12</fullName>
    </recommendedName>
    <alternativeName>
        <fullName evidence="4">30S ribosomal protein S12</fullName>
    </alternativeName>
</protein>
<organism>
    <name type="scientific">Mycobacterium sp. (strain KMS)</name>
    <dbReference type="NCBI Taxonomy" id="189918"/>
    <lineage>
        <taxon>Bacteria</taxon>
        <taxon>Bacillati</taxon>
        <taxon>Actinomycetota</taxon>
        <taxon>Actinomycetes</taxon>
        <taxon>Mycobacteriales</taxon>
        <taxon>Mycobacteriaceae</taxon>
        <taxon>Mycobacterium</taxon>
    </lineage>
</organism>
<feature type="chain" id="PRO_0000296002" description="Small ribosomal subunit protein uS12">
    <location>
        <begin position="1"/>
        <end position="124"/>
    </location>
</feature>
<feature type="region of interest" description="Disordered" evidence="3">
    <location>
        <begin position="105"/>
        <end position="124"/>
    </location>
</feature>
<feature type="compositionally biased region" description="Basic residues" evidence="3">
    <location>
        <begin position="108"/>
        <end position="118"/>
    </location>
</feature>
<feature type="modified residue" description="3-methylthioaspartic acid" evidence="1">
    <location>
        <position position="89"/>
    </location>
</feature>
<evidence type="ECO:0000250" key="1"/>
<evidence type="ECO:0000255" key="2">
    <source>
        <dbReference type="HAMAP-Rule" id="MF_00403"/>
    </source>
</evidence>
<evidence type="ECO:0000256" key="3">
    <source>
        <dbReference type="SAM" id="MobiDB-lite"/>
    </source>
</evidence>
<evidence type="ECO:0000305" key="4"/>
<name>RS12_MYCSK</name>
<dbReference type="EMBL" id="CP000518">
    <property type="protein sequence ID" value="ABL90216.1"/>
    <property type="molecule type" value="Genomic_DNA"/>
</dbReference>
<dbReference type="SMR" id="A1UBK8"/>
<dbReference type="STRING" id="189918.Mkms_1002"/>
<dbReference type="KEGG" id="mkm:Mkms_1002"/>
<dbReference type="HOGENOM" id="CLU_104295_1_2_11"/>
<dbReference type="OrthoDB" id="9802366at2"/>
<dbReference type="GO" id="GO:0015935">
    <property type="term" value="C:small ribosomal subunit"/>
    <property type="evidence" value="ECO:0007669"/>
    <property type="project" value="InterPro"/>
</dbReference>
<dbReference type="GO" id="GO:0019843">
    <property type="term" value="F:rRNA binding"/>
    <property type="evidence" value="ECO:0007669"/>
    <property type="project" value="UniProtKB-UniRule"/>
</dbReference>
<dbReference type="GO" id="GO:0003735">
    <property type="term" value="F:structural constituent of ribosome"/>
    <property type="evidence" value="ECO:0007669"/>
    <property type="project" value="InterPro"/>
</dbReference>
<dbReference type="GO" id="GO:0000049">
    <property type="term" value="F:tRNA binding"/>
    <property type="evidence" value="ECO:0007669"/>
    <property type="project" value="UniProtKB-UniRule"/>
</dbReference>
<dbReference type="GO" id="GO:0006412">
    <property type="term" value="P:translation"/>
    <property type="evidence" value="ECO:0007669"/>
    <property type="project" value="UniProtKB-UniRule"/>
</dbReference>
<dbReference type="CDD" id="cd03368">
    <property type="entry name" value="Ribosomal_S12"/>
    <property type="match status" value="1"/>
</dbReference>
<dbReference type="FunFam" id="2.40.50.140:FF:000001">
    <property type="entry name" value="30S ribosomal protein S12"/>
    <property type="match status" value="1"/>
</dbReference>
<dbReference type="Gene3D" id="2.40.50.140">
    <property type="entry name" value="Nucleic acid-binding proteins"/>
    <property type="match status" value="1"/>
</dbReference>
<dbReference type="HAMAP" id="MF_00403_B">
    <property type="entry name" value="Ribosomal_uS12_B"/>
    <property type="match status" value="1"/>
</dbReference>
<dbReference type="InterPro" id="IPR012340">
    <property type="entry name" value="NA-bd_OB-fold"/>
</dbReference>
<dbReference type="InterPro" id="IPR006032">
    <property type="entry name" value="Ribosomal_uS12"/>
</dbReference>
<dbReference type="InterPro" id="IPR005679">
    <property type="entry name" value="Ribosomal_uS12_bac"/>
</dbReference>
<dbReference type="NCBIfam" id="TIGR00981">
    <property type="entry name" value="rpsL_bact"/>
    <property type="match status" value="1"/>
</dbReference>
<dbReference type="PANTHER" id="PTHR11652">
    <property type="entry name" value="30S RIBOSOMAL PROTEIN S12 FAMILY MEMBER"/>
    <property type="match status" value="1"/>
</dbReference>
<dbReference type="Pfam" id="PF00164">
    <property type="entry name" value="Ribosom_S12_S23"/>
    <property type="match status" value="1"/>
</dbReference>
<dbReference type="PIRSF" id="PIRSF002133">
    <property type="entry name" value="Ribosomal_S12/S23"/>
    <property type="match status" value="1"/>
</dbReference>
<dbReference type="PRINTS" id="PR01034">
    <property type="entry name" value="RIBOSOMALS12"/>
</dbReference>
<dbReference type="SUPFAM" id="SSF50249">
    <property type="entry name" value="Nucleic acid-binding proteins"/>
    <property type="match status" value="1"/>
</dbReference>
<dbReference type="PROSITE" id="PS00055">
    <property type="entry name" value="RIBOSOMAL_S12"/>
    <property type="match status" value="1"/>
</dbReference>
<keyword id="KW-0488">Methylation</keyword>
<keyword id="KW-0687">Ribonucleoprotein</keyword>
<keyword id="KW-0689">Ribosomal protein</keyword>
<keyword id="KW-0694">RNA-binding</keyword>
<keyword id="KW-0699">rRNA-binding</keyword>
<keyword id="KW-0820">tRNA-binding</keyword>